<reference key="1">
    <citation type="journal article" date="2005" name="Nat. Biotechnol.">
        <title>The complete genome sequence of the meat-borne lactic acid bacterium Lactobacillus sakei 23K.</title>
        <authorList>
            <person name="Chaillou S."/>
            <person name="Champomier-Verges M.-C."/>
            <person name="Cornet M."/>
            <person name="Crutz-Le Coq A.-M."/>
            <person name="Dudez A.-M."/>
            <person name="Martin V."/>
            <person name="Beaufils S."/>
            <person name="Darbon-Rongere E."/>
            <person name="Bossy R."/>
            <person name="Loux V."/>
            <person name="Zagorec M."/>
        </authorList>
    </citation>
    <scope>NUCLEOTIDE SEQUENCE [LARGE SCALE GENOMIC DNA]</scope>
    <source>
        <strain>23K</strain>
    </source>
</reference>
<comment type="function">
    <text evidence="1">One of several proteins that assist in the late maturation steps of the functional core of the 30S ribosomal subunit. Associates with free 30S ribosomal subunits (but not with 30S subunits that are part of 70S ribosomes or polysomes). Required for efficient processing of 16S rRNA. May interact with the 5'-terminal helix region of 16S rRNA.</text>
</comment>
<comment type="subunit">
    <text evidence="1">Monomer. Binds 30S ribosomal subunits, but not 50S ribosomal subunits or 70S ribosomes.</text>
</comment>
<comment type="subcellular location">
    <subcellularLocation>
        <location evidence="1">Cytoplasm</location>
    </subcellularLocation>
</comment>
<comment type="similarity">
    <text evidence="1">Belongs to the RbfA family.</text>
</comment>
<name>RBFA_LATSS</name>
<protein>
    <recommendedName>
        <fullName evidence="1">Ribosome-binding factor A</fullName>
    </recommendedName>
</protein>
<gene>
    <name evidence="1" type="primary">rbfA</name>
    <name type="ordered locus">LCA_1247</name>
</gene>
<sequence length="118" mass="13648">MKHRVGRVEQEIQREVNDILLKRVRDPRVEGVTITDINLSGDLQHVKVYYSILSNLASDAEKAQKGLDKAKGLIRSELGQRIKLYKIPEITFEQDGSVRYGEHIDELLRKLHQDEAQR</sequence>
<organism>
    <name type="scientific">Latilactobacillus sakei subsp. sakei (strain 23K)</name>
    <name type="common">Lactobacillus sakei subsp. sakei</name>
    <dbReference type="NCBI Taxonomy" id="314315"/>
    <lineage>
        <taxon>Bacteria</taxon>
        <taxon>Bacillati</taxon>
        <taxon>Bacillota</taxon>
        <taxon>Bacilli</taxon>
        <taxon>Lactobacillales</taxon>
        <taxon>Lactobacillaceae</taxon>
        <taxon>Latilactobacillus</taxon>
    </lineage>
</organism>
<evidence type="ECO:0000255" key="1">
    <source>
        <dbReference type="HAMAP-Rule" id="MF_00003"/>
    </source>
</evidence>
<accession>Q38W82</accession>
<feature type="chain" id="PRO_0000321228" description="Ribosome-binding factor A">
    <location>
        <begin position="1"/>
        <end position="118"/>
    </location>
</feature>
<proteinExistence type="inferred from homology"/>
<dbReference type="EMBL" id="CR936503">
    <property type="protein sequence ID" value="CAI55551.1"/>
    <property type="molecule type" value="Genomic_DNA"/>
</dbReference>
<dbReference type="RefSeq" id="WP_011374944.1">
    <property type="nucleotide sequence ID" value="NC_007576.1"/>
</dbReference>
<dbReference type="SMR" id="Q38W82"/>
<dbReference type="STRING" id="314315.LCA_1247"/>
<dbReference type="GeneID" id="57132150"/>
<dbReference type="KEGG" id="lsa:LCA_1247"/>
<dbReference type="eggNOG" id="COG0858">
    <property type="taxonomic scope" value="Bacteria"/>
</dbReference>
<dbReference type="HOGENOM" id="CLU_089475_3_0_9"/>
<dbReference type="OrthoDB" id="307788at2"/>
<dbReference type="Proteomes" id="UP000002707">
    <property type="component" value="Chromosome"/>
</dbReference>
<dbReference type="GO" id="GO:0005829">
    <property type="term" value="C:cytosol"/>
    <property type="evidence" value="ECO:0007669"/>
    <property type="project" value="TreeGrafter"/>
</dbReference>
<dbReference type="GO" id="GO:0043024">
    <property type="term" value="F:ribosomal small subunit binding"/>
    <property type="evidence" value="ECO:0007669"/>
    <property type="project" value="TreeGrafter"/>
</dbReference>
<dbReference type="GO" id="GO:0030490">
    <property type="term" value="P:maturation of SSU-rRNA"/>
    <property type="evidence" value="ECO:0007669"/>
    <property type="project" value="UniProtKB-UniRule"/>
</dbReference>
<dbReference type="Gene3D" id="3.30.300.20">
    <property type="match status" value="1"/>
</dbReference>
<dbReference type="HAMAP" id="MF_00003">
    <property type="entry name" value="RbfA"/>
    <property type="match status" value="1"/>
</dbReference>
<dbReference type="InterPro" id="IPR015946">
    <property type="entry name" value="KH_dom-like_a/b"/>
</dbReference>
<dbReference type="InterPro" id="IPR000238">
    <property type="entry name" value="RbfA"/>
</dbReference>
<dbReference type="InterPro" id="IPR023799">
    <property type="entry name" value="RbfA_dom_sf"/>
</dbReference>
<dbReference type="InterPro" id="IPR020053">
    <property type="entry name" value="Ribosome-bd_factorA_CS"/>
</dbReference>
<dbReference type="NCBIfam" id="TIGR00082">
    <property type="entry name" value="rbfA"/>
    <property type="match status" value="1"/>
</dbReference>
<dbReference type="PANTHER" id="PTHR33515">
    <property type="entry name" value="RIBOSOME-BINDING FACTOR A, CHLOROPLASTIC-RELATED"/>
    <property type="match status" value="1"/>
</dbReference>
<dbReference type="PANTHER" id="PTHR33515:SF1">
    <property type="entry name" value="RIBOSOME-BINDING FACTOR A, CHLOROPLASTIC-RELATED"/>
    <property type="match status" value="1"/>
</dbReference>
<dbReference type="Pfam" id="PF02033">
    <property type="entry name" value="RBFA"/>
    <property type="match status" value="1"/>
</dbReference>
<dbReference type="SUPFAM" id="SSF89919">
    <property type="entry name" value="Ribosome-binding factor A, RbfA"/>
    <property type="match status" value="1"/>
</dbReference>
<dbReference type="PROSITE" id="PS01319">
    <property type="entry name" value="RBFA"/>
    <property type="match status" value="1"/>
</dbReference>
<keyword id="KW-0963">Cytoplasm</keyword>
<keyword id="KW-1185">Reference proteome</keyword>
<keyword id="KW-0690">Ribosome biogenesis</keyword>